<reference key="1">
    <citation type="journal article" date="2009" name="PLoS Genet.">
        <title>Organised genome dynamics in the Escherichia coli species results in highly diverse adaptive paths.</title>
        <authorList>
            <person name="Touchon M."/>
            <person name="Hoede C."/>
            <person name="Tenaillon O."/>
            <person name="Barbe V."/>
            <person name="Baeriswyl S."/>
            <person name="Bidet P."/>
            <person name="Bingen E."/>
            <person name="Bonacorsi S."/>
            <person name="Bouchier C."/>
            <person name="Bouvet O."/>
            <person name="Calteau A."/>
            <person name="Chiapello H."/>
            <person name="Clermont O."/>
            <person name="Cruveiller S."/>
            <person name="Danchin A."/>
            <person name="Diard M."/>
            <person name="Dossat C."/>
            <person name="Karoui M.E."/>
            <person name="Frapy E."/>
            <person name="Garry L."/>
            <person name="Ghigo J.M."/>
            <person name="Gilles A.M."/>
            <person name="Johnson J."/>
            <person name="Le Bouguenec C."/>
            <person name="Lescat M."/>
            <person name="Mangenot S."/>
            <person name="Martinez-Jehanne V."/>
            <person name="Matic I."/>
            <person name="Nassif X."/>
            <person name="Oztas S."/>
            <person name="Petit M.A."/>
            <person name="Pichon C."/>
            <person name="Rouy Z."/>
            <person name="Ruf C.S."/>
            <person name="Schneider D."/>
            <person name="Tourret J."/>
            <person name="Vacherie B."/>
            <person name="Vallenet D."/>
            <person name="Medigue C."/>
            <person name="Rocha E.P.C."/>
            <person name="Denamur E."/>
        </authorList>
    </citation>
    <scope>NUCLEOTIDE SEQUENCE [LARGE SCALE GENOMIC DNA]</scope>
    <source>
        <strain>IAI1</strain>
    </source>
</reference>
<proteinExistence type="inferred from homology"/>
<organism>
    <name type="scientific">Escherichia coli O8 (strain IAI1)</name>
    <dbReference type="NCBI Taxonomy" id="585034"/>
    <lineage>
        <taxon>Bacteria</taxon>
        <taxon>Pseudomonadati</taxon>
        <taxon>Pseudomonadota</taxon>
        <taxon>Gammaproteobacteria</taxon>
        <taxon>Enterobacterales</taxon>
        <taxon>Enterobacteriaceae</taxon>
        <taxon>Escherichia</taxon>
    </lineage>
</organism>
<sequence length="397" mass="41656">MSESVHTNTSLWSKGMKAVIVAQFLSAFGDNALLFATLALLKAQFYPEWSQPILQMVFVGAYILFAPFVGQVADSFAKGRVMMFANGLKLLGAASICFGINPFLGYTLVGVGAAAYSPAKYGILGELTTGSKLVKANGLMEASTIAAILLGSVAGGVLADWHVLVALAACALAYGGAVVANIYIPKLAAARPGQSWNLINMTRSFLNACTSLWRNGETRFSLVGTSLFWGAGVTLRFLLVLWVPVALGITDNATPTYLNAMVAIGIVVGAGAAAKLVTLETVSRCMPAGILIGVVVLIFSLQHELLPAYALLMLIGVMGGFFVVPLNALLQERGKKSVGAGNAIAVQNLGENSAMLLMLGIYSLAVMIGIPVVPIGIGFGALFALAITALWIWQRRH</sequence>
<name>LPLT_ECO8A</name>
<accession>B7LY91</accession>
<protein>
    <recommendedName>
        <fullName evidence="1">Lysophospholipid transporter LplT</fullName>
    </recommendedName>
</protein>
<gene>
    <name evidence="1" type="primary">lplT</name>
    <name type="ordered locus">ECIAI1_2944</name>
</gene>
<comment type="function">
    <text evidence="1">Catalyzes the facilitated diffusion of 2-acyl-glycero-3-phosphoethanolamine (2-acyl-GPE) into the cell.</text>
</comment>
<comment type="subcellular location">
    <subcellularLocation>
        <location evidence="1">Cell inner membrane</location>
        <topology evidence="1">Multi-pass membrane protein</topology>
    </subcellularLocation>
</comment>
<comment type="similarity">
    <text evidence="1">Belongs to the major facilitator superfamily. LplT (TC 2.A.1.42) family.</text>
</comment>
<keyword id="KW-0997">Cell inner membrane</keyword>
<keyword id="KW-1003">Cell membrane</keyword>
<keyword id="KW-0445">Lipid transport</keyword>
<keyword id="KW-0472">Membrane</keyword>
<keyword id="KW-0812">Transmembrane</keyword>
<keyword id="KW-1133">Transmembrane helix</keyword>
<keyword id="KW-0813">Transport</keyword>
<evidence type="ECO:0000255" key="1">
    <source>
        <dbReference type="HAMAP-Rule" id="MF_01585"/>
    </source>
</evidence>
<dbReference type="EMBL" id="CU928160">
    <property type="protein sequence ID" value="CAQ99761.1"/>
    <property type="molecule type" value="Genomic_DNA"/>
</dbReference>
<dbReference type="RefSeq" id="WP_000004616.1">
    <property type="nucleotide sequence ID" value="NC_011741.1"/>
</dbReference>
<dbReference type="SMR" id="B7LY91"/>
<dbReference type="KEGG" id="ecr:ECIAI1_2944"/>
<dbReference type="HOGENOM" id="CLU_047399_0_0_6"/>
<dbReference type="GO" id="GO:0005886">
    <property type="term" value="C:plasma membrane"/>
    <property type="evidence" value="ECO:0007669"/>
    <property type="project" value="UniProtKB-SubCell"/>
</dbReference>
<dbReference type="GO" id="GO:0051978">
    <property type="term" value="F:lysophospholipid:sodium symporter activity"/>
    <property type="evidence" value="ECO:0007669"/>
    <property type="project" value="InterPro"/>
</dbReference>
<dbReference type="CDD" id="cd06173">
    <property type="entry name" value="MFS_MefA_like"/>
    <property type="match status" value="1"/>
</dbReference>
<dbReference type="FunFam" id="1.20.1250.20:FF:000091">
    <property type="entry name" value="Lysophospholipid transporter LplT"/>
    <property type="match status" value="1"/>
</dbReference>
<dbReference type="Gene3D" id="1.20.1250.20">
    <property type="entry name" value="MFS general substrate transporter like domains"/>
    <property type="match status" value="1"/>
</dbReference>
<dbReference type="HAMAP" id="MF_01585">
    <property type="entry name" value="MFS_LplT"/>
    <property type="match status" value="1"/>
</dbReference>
<dbReference type="InterPro" id="IPR023727">
    <property type="entry name" value="LysoPLipid__transptr_LplT"/>
</dbReference>
<dbReference type="InterPro" id="IPR011701">
    <property type="entry name" value="MFS"/>
</dbReference>
<dbReference type="InterPro" id="IPR036259">
    <property type="entry name" value="MFS_trans_sf"/>
</dbReference>
<dbReference type="NCBIfam" id="NF008397">
    <property type="entry name" value="PRK11195.1"/>
    <property type="match status" value="1"/>
</dbReference>
<dbReference type="PANTHER" id="PTHR43266">
    <property type="entry name" value="MACROLIDE-EFFLUX PROTEIN"/>
    <property type="match status" value="1"/>
</dbReference>
<dbReference type="PANTHER" id="PTHR43266:SF2">
    <property type="entry name" value="MAJOR FACILITATOR SUPERFAMILY (MFS) PROFILE DOMAIN-CONTAINING PROTEIN"/>
    <property type="match status" value="1"/>
</dbReference>
<dbReference type="Pfam" id="PF07690">
    <property type="entry name" value="MFS_1"/>
    <property type="match status" value="1"/>
</dbReference>
<dbReference type="SUPFAM" id="SSF103473">
    <property type="entry name" value="MFS general substrate transporter"/>
    <property type="match status" value="1"/>
</dbReference>
<feature type="chain" id="PRO_1000201270" description="Lysophospholipid transporter LplT">
    <location>
        <begin position="1"/>
        <end position="397"/>
    </location>
</feature>
<feature type="topological domain" description="Periplasmic" evidence="1">
    <location>
        <begin position="1"/>
        <end position="17"/>
    </location>
</feature>
<feature type="transmembrane region" description="Helical" evidence="1">
    <location>
        <begin position="18"/>
        <end position="38"/>
    </location>
</feature>
<feature type="topological domain" description="Cytoplasmic" evidence="1">
    <location>
        <begin position="39"/>
        <end position="52"/>
    </location>
</feature>
<feature type="transmembrane region" description="Helical" evidence="1">
    <location>
        <begin position="53"/>
        <end position="73"/>
    </location>
</feature>
<feature type="topological domain" description="Periplasmic" evidence="1">
    <location>
        <begin position="74"/>
        <end position="90"/>
    </location>
</feature>
<feature type="transmembrane region" description="Helical" evidence="1">
    <location>
        <begin position="91"/>
        <end position="111"/>
    </location>
</feature>
<feature type="topological domain" description="Cytoplasmic" evidence="1">
    <location>
        <begin position="112"/>
        <end position="144"/>
    </location>
</feature>
<feature type="transmembrane region" description="Helical" evidence="1">
    <location>
        <begin position="145"/>
        <end position="165"/>
    </location>
</feature>
<feature type="topological domain" description="Periplasmic" evidence="1">
    <location>
        <position position="166"/>
    </location>
</feature>
<feature type="transmembrane region" description="Helical" evidence="1">
    <location>
        <begin position="167"/>
        <end position="187"/>
    </location>
</feature>
<feature type="topological domain" description="Cytoplasmic" evidence="1">
    <location>
        <begin position="188"/>
        <end position="226"/>
    </location>
</feature>
<feature type="transmembrane region" description="Helical" evidence="1">
    <location>
        <begin position="227"/>
        <end position="247"/>
    </location>
</feature>
<feature type="topological domain" description="Periplasmic" evidence="1">
    <location>
        <begin position="248"/>
        <end position="256"/>
    </location>
</feature>
<feature type="transmembrane region" description="Helical" evidence="1">
    <location>
        <begin position="257"/>
        <end position="277"/>
    </location>
</feature>
<feature type="topological domain" description="Cytoplasmic" evidence="1">
    <location>
        <begin position="278"/>
        <end position="280"/>
    </location>
</feature>
<feature type="transmembrane region" description="Helical" evidence="1">
    <location>
        <begin position="281"/>
        <end position="301"/>
    </location>
</feature>
<feature type="topological domain" description="Periplasmic" evidence="1">
    <location>
        <begin position="302"/>
        <end position="304"/>
    </location>
</feature>
<feature type="transmembrane region" description="Helical" evidence="1">
    <location>
        <begin position="305"/>
        <end position="325"/>
    </location>
</feature>
<feature type="topological domain" description="Cytoplasmic" evidence="1">
    <location>
        <begin position="326"/>
        <end position="343"/>
    </location>
</feature>
<feature type="transmembrane region" description="Helical" evidence="1">
    <location>
        <begin position="344"/>
        <end position="364"/>
    </location>
</feature>
<feature type="topological domain" description="Periplasmic" evidence="1">
    <location>
        <begin position="365"/>
        <end position="366"/>
    </location>
</feature>
<feature type="transmembrane region" description="Helical" evidence="1">
    <location>
        <begin position="367"/>
        <end position="387"/>
    </location>
</feature>
<feature type="topological domain" description="Cytoplasmic" evidence="1">
    <location>
        <begin position="388"/>
        <end position="397"/>
    </location>
</feature>